<comment type="function">
    <text evidence="1">Binds to 23S rRNA.</text>
</comment>
<comment type="subunit">
    <text evidence="1">Part of the 50S ribosomal subunit.</text>
</comment>
<comment type="subcellular location">
    <subcellularLocation>
        <location>Plastid</location>
        <location>Chloroplast</location>
    </subcellularLocation>
</comment>
<comment type="similarity">
    <text evidence="2">Belongs to the universal ribosomal protein uL23 family.</text>
</comment>
<gene>
    <name type="primary">rpl23-A</name>
    <name type="ORF">JNC0943</name>
</gene>
<gene>
    <name type="primary">rpl23-B</name>
    <name type="ORF">JNC1633</name>
</gene>
<keyword id="KW-0150">Chloroplast</keyword>
<keyword id="KW-0934">Plastid</keyword>
<keyword id="KW-0687">Ribonucleoprotein</keyword>
<keyword id="KW-0689">Ribosomal protein</keyword>
<keyword id="KW-0694">RNA-binding</keyword>
<keyword id="KW-0699">rRNA-binding</keyword>
<evidence type="ECO:0000250" key="1"/>
<evidence type="ECO:0000305" key="2"/>
<sequence length="93" mass="10747">MDGIKYAVFTEKSIRLLGKNQYTSNVESGSTRTEIKHWVELFFGVKVIAMNSHRLPGKGRRMGPIMGHTMHYRRMIITLQPGYSIPPLRKKRT</sequence>
<protein>
    <recommendedName>
        <fullName evidence="2">Large ribosomal subunit protein uL23cz/uL23cy</fullName>
    </recommendedName>
    <alternativeName>
        <fullName>50S ribosomal protein L23, chloroplastic</fullName>
    </alternativeName>
</protein>
<proteinExistence type="inferred from homology"/>
<name>RK23_JASNU</name>
<feature type="chain" id="PRO_0000272905" description="Large ribosomal subunit protein uL23cz/uL23cy">
    <location>
        <begin position="1"/>
        <end position="93"/>
    </location>
</feature>
<reference key="1">
    <citation type="journal article" date="2007" name="Mol. Biol. Evol.">
        <title>Gene relocations within chloroplast genomes of Jasminum and Menodora (Oleaceae) are due to multiple, overlapping inversions.</title>
        <authorList>
            <person name="Lee H.-L."/>
            <person name="Jansen R.K."/>
            <person name="Chumley T.W."/>
            <person name="Kim K.-J."/>
        </authorList>
    </citation>
    <scope>NUCLEOTIDE SEQUENCE [LARGE SCALE GENOMIC DNA]</scope>
</reference>
<dbReference type="EMBL" id="DQ673255">
    <property type="protein sequence ID" value="ABG74669.1"/>
    <property type="molecule type" value="Genomic_DNA"/>
</dbReference>
<dbReference type="EMBL" id="DQ673255">
    <property type="protein sequence ID" value="ABG74693.1"/>
    <property type="molecule type" value="Genomic_DNA"/>
</dbReference>
<dbReference type="SMR" id="Q06R67"/>
<dbReference type="GO" id="GO:0009507">
    <property type="term" value="C:chloroplast"/>
    <property type="evidence" value="ECO:0007669"/>
    <property type="project" value="UniProtKB-SubCell"/>
</dbReference>
<dbReference type="GO" id="GO:1990904">
    <property type="term" value="C:ribonucleoprotein complex"/>
    <property type="evidence" value="ECO:0007669"/>
    <property type="project" value="UniProtKB-KW"/>
</dbReference>
<dbReference type="GO" id="GO:0005840">
    <property type="term" value="C:ribosome"/>
    <property type="evidence" value="ECO:0007669"/>
    <property type="project" value="UniProtKB-KW"/>
</dbReference>
<dbReference type="GO" id="GO:0003729">
    <property type="term" value="F:mRNA binding"/>
    <property type="evidence" value="ECO:0007669"/>
    <property type="project" value="UniProtKB-ARBA"/>
</dbReference>
<dbReference type="GO" id="GO:0019843">
    <property type="term" value="F:rRNA binding"/>
    <property type="evidence" value="ECO:0007669"/>
    <property type="project" value="UniProtKB-UniRule"/>
</dbReference>
<dbReference type="GO" id="GO:0003735">
    <property type="term" value="F:structural constituent of ribosome"/>
    <property type="evidence" value="ECO:0007669"/>
    <property type="project" value="InterPro"/>
</dbReference>
<dbReference type="GO" id="GO:0006412">
    <property type="term" value="P:translation"/>
    <property type="evidence" value="ECO:0007669"/>
    <property type="project" value="UniProtKB-UniRule"/>
</dbReference>
<dbReference type="FunFam" id="3.30.70.330:FF:000002">
    <property type="entry name" value="50S ribosomal protein L23, chloroplastic"/>
    <property type="match status" value="1"/>
</dbReference>
<dbReference type="Gene3D" id="3.30.70.330">
    <property type="match status" value="1"/>
</dbReference>
<dbReference type="HAMAP" id="MF_01369_B">
    <property type="entry name" value="Ribosomal_uL23_B"/>
    <property type="match status" value="1"/>
</dbReference>
<dbReference type="InterPro" id="IPR012677">
    <property type="entry name" value="Nucleotide-bd_a/b_plait_sf"/>
</dbReference>
<dbReference type="InterPro" id="IPR013025">
    <property type="entry name" value="Ribosomal_uL23-like"/>
</dbReference>
<dbReference type="InterPro" id="IPR012678">
    <property type="entry name" value="Ribosomal_uL23/eL15/eS24_sf"/>
</dbReference>
<dbReference type="InterPro" id="IPR001014">
    <property type="entry name" value="Ribosomal_uL23_CS"/>
</dbReference>
<dbReference type="PANTHER" id="PTHR11620">
    <property type="entry name" value="60S RIBOSOMAL PROTEIN L23A"/>
    <property type="match status" value="1"/>
</dbReference>
<dbReference type="Pfam" id="PF00276">
    <property type="entry name" value="Ribosomal_L23"/>
    <property type="match status" value="1"/>
</dbReference>
<dbReference type="SUPFAM" id="SSF54189">
    <property type="entry name" value="Ribosomal proteins S24e, L23 and L15e"/>
    <property type="match status" value="1"/>
</dbReference>
<dbReference type="PROSITE" id="PS00050">
    <property type="entry name" value="RIBOSOMAL_L23"/>
    <property type="match status" value="1"/>
</dbReference>
<accession>Q06R67</accession>
<geneLocation type="chloroplast"/>
<organism>
    <name type="scientific">Jasminum nudiflorum</name>
    <name type="common">Winter jasmine</name>
    <dbReference type="NCBI Taxonomy" id="126431"/>
    <lineage>
        <taxon>Eukaryota</taxon>
        <taxon>Viridiplantae</taxon>
        <taxon>Streptophyta</taxon>
        <taxon>Embryophyta</taxon>
        <taxon>Tracheophyta</taxon>
        <taxon>Spermatophyta</taxon>
        <taxon>Magnoliopsida</taxon>
        <taxon>eudicotyledons</taxon>
        <taxon>Gunneridae</taxon>
        <taxon>Pentapetalae</taxon>
        <taxon>asterids</taxon>
        <taxon>lamiids</taxon>
        <taxon>Lamiales</taxon>
        <taxon>Oleaceae</taxon>
        <taxon>Jasmineae</taxon>
        <taxon>Jasminum</taxon>
    </lineage>
</organism>